<feature type="chain" id="PRO_1000052310" description="Large ribosomal subunit protein uL24">
    <location>
        <begin position="1"/>
        <end position="104"/>
    </location>
</feature>
<proteinExistence type="inferred from homology"/>
<reference key="1">
    <citation type="submission" date="2006-08" db="EMBL/GenBank/DDBJ databases">
        <title>Complete sequence of Shewanella sp. MR-4.</title>
        <authorList>
            <consortium name="US DOE Joint Genome Institute"/>
            <person name="Copeland A."/>
            <person name="Lucas S."/>
            <person name="Lapidus A."/>
            <person name="Barry K."/>
            <person name="Detter J.C."/>
            <person name="Glavina del Rio T."/>
            <person name="Hammon N."/>
            <person name="Israni S."/>
            <person name="Dalin E."/>
            <person name="Tice H."/>
            <person name="Pitluck S."/>
            <person name="Kiss H."/>
            <person name="Brettin T."/>
            <person name="Bruce D."/>
            <person name="Han C."/>
            <person name="Tapia R."/>
            <person name="Gilna P."/>
            <person name="Schmutz J."/>
            <person name="Larimer F."/>
            <person name="Land M."/>
            <person name="Hauser L."/>
            <person name="Kyrpides N."/>
            <person name="Mikhailova N."/>
            <person name="Nealson K."/>
            <person name="Konstantinidis K."/>
            <person name="Klappenbach J."/>
            <person name="Tiedje J."/>
            <person name="Richardson P."/>
        </authorList>
    </citation>
    <scope>NUCLEOTIDE SEQUENCE [LARGE SCALE GENOMIC DNA]</scope>
    <source>
        <strain>MR-4</strain>
    </source>
</reference>
<evidence type="ECO:0000255" key="1">
    <source>
        <dbReference type="HAMAP-Rule" id="MF_01326"/>
    </source>
</evidence>
<evidence type="ECO:0000305" key="2"/>
<comment type="function">
    <text evidence="1">One of two assembly initiator proteins, it binds directly to the 5'-end of the 23S rRNA, where it nucleates assembly of the 50S subunit.</text>
</comment>
<comment type="function">
    <text evidence="1">One of the proteins that surrounds the polypeptide exit tunnel on the outside of the subunit.</text>
</comment>
<comment type="subunit">
    <text evidence="1">Part of the 50S ribosomal subunit.</text>
</comment>
<comment type="similarity">
    <text evidence="1">Belongs to the universal ribosomal protein uL24 family.</text>
</comment>
<keyword id="KW-0687">Ribonucleoprotein</keyword>
<keyword id="KW-0689">Ribosomal protein</keyword>
<keyword id="KW-0694">RNA-binding</keyword>
<keyword id="KW-0699">rRNA-binding</keyword>
<accession>Q0HNS6</accession>
<protein>
    <recommendedName>
        <fullName evidence="1">Large ribosomal subunit protein uL24</fullName>
    </recommendedName>
    <alternativeName>
        <fullName evidence="2">50S ribosomal protein L24</fullName>
    </alternativeName>
</protein>
<sequence length="104" mass="11318">MAAKIRRQDEVIVLAGKDKGKRAKVAQVLPTGKLIVEGINLVKKHQKPNPQLGVAGGIVEKEAPIQASNVAIFNPVTGKADRVGFRFEDGKKVRFFKSNSELVK</sequence>
<gene>
    <name evidence="1" type="primary">rplX</name>
    <name type="ordered locus">Shewmr4_0210</name>
</gene>
<organism>
    <name type="scientific">Shewanella sp. (strain MR-4)</name>
    <dbReference type="NCBI Taxonomy" id="60480"/>
    <lineage>
        <taxon>Bacteria</taxon>
        <taxon>Pseudomonadati</taxon>
        <taxon>Pseudomonadota</taxon>
        <taxon>Gammaproteobacteria</taxon>
        <taxon>Alteromonadales</taxon>
        <taxon>Shewanellaceae</taxon>
        <taxon>Shewanella</taxon>
    </lineage>
</organism>
<dbReference type="EMBL" id="CP000446">
    <property type="protein sequence ID" value="ABI37291.1"/>
    <property type="molecule type" value="Genomic_DNA"/>
</dbReference>
<dbReference type="RefSeq" id="WP_011070623.1">
    <property type="nucleotide sequence ID" value="NC_008321.1"/>
</dbReference>
<dbReference type="SMR" id="Q0HNS6"/>
<dbReference type="GeneID" id="94726197"/>
<dbReference type="KEGG" id="she:Shewmr4_0210"/>
<dbReference type="HOGENOM" id="CLU_093315_2_2_6"/>
<dbReference type="GO" id="GO:1990904">
    <property type="term" value="C:ribonucleoprotein complex"/>
    <property type="evidence" value="ECO:0007669"/>
    <property type="project" value="UniProtKB-KW"/>
</dbReference>
<dbReference type="GO" id="GO:0005840">
    <property type="term" value="C:ribosome"/>
    <property type="evidence" value="ECO:0007669"/>
    <property type="project" value="UniProtKB-KW"/>
</dbReference>
<dbReference type="GO" id="GO:0019843">
    <property type="term" value="F:rRNA binding"/>
    <property type="evidence" value="ECO:0007669"/>
    <property type="project" value="UniProtKB-UniRule"/>
</dbReference>
<dbReference type="GO" id="GO:0003735">
    <property type="term" value="F:structural constituent of ribosome"/>
    <property type="evidence" value="ECO:0007669"/>
    <property type="project" value="InterPro"/>
</dbReference>
<dbReference type="GO" id="GO:0006412">
    <property type="term" value="P:translation"/>
    <property type="evidence" value="ECO:0007669"/>
    <property type="project" value="UniProtKB-UniRule"/>
</dbReference>
<dbReference type="CDD" id="cd06089">
    <property type="entry name" value="KOW_RPL26"/>
    <property type="match status" value="1"/>
</dbReference>
<dbReference type="FunFam" id="2.30.30.30:FF:000004">
    <property type="entry name" value="50S ribosomal protein L24"/>
    <property type="match status" value="1"/>
</dbReference>
<dbReference type="Gene3D" id="2.30.30.30">
    <property type="match status" value="1"/>
</dbReference>
<dbReference type="HAMAP" id="MF_01326_B">
    <property type="entry name" value="Ribosomal_uL24_B"/>
    <property type="match status" value="1"/>
</dbReference>
<dbReference type="InterPro" id="IPR005824">
    <property type="entry name" value="KOW"/>
</dbReference>
<dbReference type="InterPro" id="IPR014722">
    <property type="entry name" value="Rib_uL2_dom2"/>
</dbReference>
<dbReference type="InterPro" id="IPR003256">
    <property type="entry name" value="Ribosomal_uL24"/>
</dbReference>
<dbReference type="InterPro" id="IPR041988">
    <property type="entry name" value="Ribosomal_uL24_KOW"/>
</dbReference>
<dbReference type="InterPro" id="IPR008991">
    <property type="entry name" value="Translation_prot_SH3-like_sf"/>
</dbReference>
<dbReference type="NCBIfam" id="TIGR01079">
    <property type="entry name" value="rplX_bact"/>
    <property type="match status" value="1"/>
</dbReference>
<dbReference type="PANTHER" id="PTHR12903">
    <property type="entry name" value="MITOCHONDRIAL RIBOSOMAL PROTEIN L24"/>
    <property type="match status" value="1"/>
</dbReference>
<dbReference type="Pfam" id="PF00467">
    <property type="entry name" value="KOW"/>
    <property type="match status" value="1"/>
</dbReference>
<dbReference type="Pfam" id="PF17136">
    <property type="entry name" value="ribosomal_L24"/>
    <property type="match status" value="1"/>
</dbReference>
<dbReference type="SMART" id="SM00739">
    <property type="entry name" value="KOW"/>
    <property type="match status" value="1"/>
</dbReference>
<dbReference type="SUPFAM" id="SSF50104">
    <property type="entry name" value="Translation proteins SH3-like domain"/>
    <property type="match status" value="1"/>
</dbReference>
<name>RL24_SHESM</name>